<comment type="function">
    <text evidence="1">This protein binds specifically to 23S rRNA; its binding is stimulated by other ribosomal proteins, e.g. L4, L17, and L20. It is important during the early stages of 50S assembly. It makes multiple contacts with different domains of the 23S rRNA in the assembled 50S subunit and ribosome (By similarity).</text>
</comment>
<comment type="function">
    <text evidence="1">The globular domain of the protein is located near the polypeptide exit tunnel on the outside of the subunit, while an extended beta-hairpin is found that lines the wall of the exit tunnel in the center of the 70S ribosome.</text>
</comment>
<comment type="subunit">
    <text evidence="1">Part of the 50S ribosomal subunit.</text>
</comment>
<comment type="similarity">
    <text evidence="1">Belongs to the universal ribosomal protein uL22 family.</text>
</comment>
<evidence type="ECO:0000255" key="1">
    <source>
        <dbReference type="HAMAP-Rule" id="MF_01331"/>
    </source>
</evidence>
<evidence type="ECO:0000256" key="2">
    <source>
        <dbReference type="SAM" id="MobiDB-lite"/>
    </source>
</evidence>
<evidence type="ECO:0000305" key="3"/>
<protein>
    <recommendedName>
        <fullName evidence="1">Large ribosomal subunit protein uL22</fullName>
    </recommendedName>
    <alternativeName>
        <fullName evidence="3">50S ribosomal protein L22</fullName>
    </alternativeName>
</protein>
<accession>O52337</accession>
<keyword id="KW-1185">Reference proteome</keyword>
<keyword id="KW-0687">Ribonucleoprotein</keyword>
<keyword id="KW-0689">Ribosomal protein</keyword>
<keyword id="KW-0694">RNA-binding</keyword>
<keyword id="KW-0699">rRNA-binding</keyword>
<reference key="1">
    <citation type="journal article" date="2000" name="Mol. Biol. (Mosk.)">
        <title>Determination and analysis of the nucleotide sequence of a segment of a Mycoplasma gallisepticum strain A5969 chromosome, containing operons S10 and rrn23-5.</title>
        <authorList>
            <person name="Skamrov A.V."/>
            <person name="Gol'dman M.A."/>
            <person name="Feoktistova E.S."/>
            <person name="Bibilashvili R.S."/>
        </authorList>
    </citation>
    <scope>NUCLEOTIDE SEQUENCE [GENOMIC DNA]</scope>
    <source>
        <strain>A5969Var.B</strain>
    </source>
</reference>
<reference key="2">
    <citation type="journal article" date="2003" name="Microbiology">
        <title>The complete genome sequence of the avian pathogen Mycoplasma gallisepticum strain R(low).</title>
        <authorList>
            <person name="Papazisi L."/>
            <person name="Gorton T.S."/>
            <person name="Kutish G."/>
            <person name="Markham P.F."/>
            <person name="Browning G.F."/>
            <person name="Nguyen D.K."/>
            <person name="Swartzell S."/>
            <person name="Madan A."/>
            <person name="Mahairas G."/>
            <person name="Geary S.J."/>
        </authorList>
    </citation>
    <scope>NUCLEOTIDE SEQUENCE [LARGE SCALE GENOMIC DNA]</scope>
    <source>
        <strain>R(low / passage 15 / clone 2)</strain>
    </source>
</reference>
<name>RL22_MYCGA</name>
<organism>
    <name type="scientific">Mycoplasmoides gallisepticum (strain R(low / passage 15 / clone 2))</name>
    <name type="common">Mycoplasma gallisepticum</name>
    <dbReference type="NCBI Taxonomy" id="710127"/>
    <lineage>
        <taxon>Bacteria</taxon>
        <taxon>Bacillati</taxon>
        <taxon>Mycoplasmatota</taxon>
        <taxon>Mycoplasmoidales</taxon>
        <taxon>Mycoplasmoidaceae</taxon>
        <taxon>Mycoplasmoides</taxon>
    </lineage>
</organism>
<proteinExistence type="inferred from homology"/>
<gene>
    <name evidence="1" type="primary">rplV</name>
    <name evidence="1" type="synonym">rpl22</name>
    <name type="ordered locus">MYCGA0560</name>
    <name type="ORF">MGA_0716</name>
</gene>
<dbReference type="EMBL" id="AF036708">
    <property type="protein sequence ID" value="AAB95392.1"/>
    <property type="molecule type" value="Genomic_DNA"/>
</dbReference>
<dbReference type="EMBL" id="AE015450">
    <property type="protein sequence ID" value="AAP56406.1"/>
    <property type="molecule type" value="Genomic_DNA"/>
</dbReference>
<dbReference type="RefSeq" id="WP_011113285.1">
    <property type="nucleotide sequence ID" value="NC_004829.2"/>
</dbReference>
<dbReference type="SMR" id="O52337"/>
<dbReference type="GeneID" id="93509874"/>
<dbReference type="KEGG" id="mga:MGA_0716"/>
<dbReference type="PATRIC" id="fig|233150.7.peg.60"/>
<dbReference type="HOGENOM" id="CLU_083987_3_3_14"/>
<dbReference type="OrthoDB" id="9805969at2"/>
<dbReference type="Proteomes" id="UP000001418">
    <property type="component" value="Chromosome"/>
</dbReference>
<dbReference type="GO" id="GO:0022625">
    <property type="term" value="C:cytosolic large ribosomal subunit"/>
    <property type="evidence" value="ECO:0007669"/>
    <property type="project" value="TreeGrafter"/>
</dbReference>
<dbReference type="GO" id="GO:0019843">
    <property type="term" value="F:rRNA binding"/>
    <property type="evidence" value="ECO:0007669"/>
    <property type="project" value="UniProtKB-UniRule"/>
</dbReference>
<dbReference type="GO" id="GO:0003735">
    <property type="term" value="F:structural constituent of ribosome"/>
    <property type="evidence" value="ECO:0007669"/>
    <property type="project" value="InterPro"/>
</dbReference>
<dbReference type="GO" id="GO:0006412">
    <property type="term" value="P:translation"/>
    <property type="evidence" value="ECO:0007669"/>
    <property type="project" value="UniProtKB-UniRule"/>
</dbReference>
<dbReference type="CDD" id="cd00336">
    <property type="entry name" value="Ribosomal_L22"/>
    <property type="match status" value="1"/>
</dbReference>
<dbReference type="Gene3D" id="3.90.470.10">
    <property type="entry name" value="Ribosomal protein L22/L17"/>
    <property type="match status" value="1"/>
</dbReference>
<dbReference type="HAMAP" id="MF_01331_B">
    <property type="entry name" value="Ribosomal_uL22_B"/>
    <property type="match status" value="1"/>
</dbReference>
<dbReference type="InterPro" id="IPR001063">
    <property type="entry name" value="Ribosomal_uL22"/>
</dbReference>
<dbReference type="InterPro" id="IPR005727">
    <property type="entry name" value="Ribosomal_uL22_bac/chlpt-type"/>
</dbReference>
<dbReference type="InterPro" id="IPR047867">
    <property type="entry name" value="Ribosomal_uL22_bac/org-type"/>
</dbReference>
<dbReference type="InterPro" id="IPR036394">
    <property type="entry name" value="Ribosomal_uL22_sf"/>
</dbReference>
<dbReference type="NCBIfam" id="TIGR01044">
    <property type="entry name" value="rplV_bact"/>
    <property type="match status" value="1"/>
</dbReference>
<dbReference type="PANTHER" id="PTHR13501">
    <property type="entry name" value="CHLOROPLAST 50S RIBOSOMAL PROTEIN L22-RELATED"/>
    <property type="match status" value="1"/>
</dbReference>
<dbReference type="PANTHER" id="PTHR13501:SF8">
    <property type="entry name" value="LARGE RIBOSOMAL SUBUNIT PROTEIN UL22M"/>
    <property type="match status" value="1"/>
</dbReference>
<dbReference type="Pfam" id="PF00237">
    <property type="entry name" value="Ribosomal_L22"/>
    <property type="match status" value="1"/>
</dbReference>
<dbReference type="SUPFAM" id="SSF54843">
    <property type="entry name" value="Ribosomal protein L22"/>
    <property type="match status" value="1"/>
</dbReference>
<sequence length="144" mass="16322">MIAIARQNRVRISPQKARLVCQLIKNKSVIEAQNILVNTDKKGARIILKLLNSVIANATNNHAMLAEKLYVYEVVANQGPTLKRNLPRAKGSADMIRKRSTNFVIKLSDDKNERKHEVEAIKTRLKKRVLGQNKRKQSVSGEKK</sequence>
<feature type="chain" id="PRO_0000125176" description="Large ribosomal subunit protein uL22">
    <location>
        <begin position="1"/>
        <end position="144"/>
    </location>
</feature>
<feature type="region of interest" description="Disordered" evidence="2">
    <location>
        <begin position="124"/>
        <end position="144"/>
    </location>
</feature>
<feature type="compositionally biased region" description="Basic residues" evidence="2">
    <location>
        <begin position="124"/>
        <end position="137"/>
    </location>
</feature>